<reference key="1">
    <citation type="journal article" date="2005" name="J. Bacteriol.">
        <title>Genomic sequence of an otitis media isolate of nontypeable Haemophilus influenzae: comparative study with H. influenzae serotype d, strain KW20.</title>
        <authorList>
            <person name="Harrison A."/>
            <person name="Dyer D.W."/>
            <person name="Gillaspy A."/>
            <person name="Ray W.C."/>
            <person name="Mungur R."/>
            <person name="Carson M.B."/>
            <person name="Zhong H."/>
            <person name="Gipson J."/>
            <person name="Gipson M."/>
            <person name="Johnson L.S."/>
            <person name="Lewis L."/>
            <person name="Bakaletz L.O."/>
            <person name="Munson R.S. Jr."/>
        </authorList>
    </citation>
    <scope>NUCLEOTIDE SEQUENCE [LARGE SCALE GENOMIC DNA]</scope>
    <source>
        <strain>86-028NP</strain>
    </source>
</reference>
<gene>
    <name evidence="1" type="primary">lptD</name>
    <name type="synonym">imp</name>
    <name type="synonym">ostA</name>
    <name type="ordered locus">NTHI0889</name>
</gene>
<dbReference type="EMBL" id="CP000057">
    <property type="protein sequence ID" value="AAX87783.1"/>
    <property type="molecule type" value="Genomic_DNA"/>
</dbReference>
<dbReference type="RefSeq" id="WP_005689018.1">
    <property type="nucleotide sequence ID" value="NC_007146.2"/>
</dbReference>
<dbReference type="SMR" id="Q4QMG4"/>
<dbReference type="GeneID" id="93219770"/>
<dbReference type="KEGG" id="hit:NTHI0889"/>
<dbReference type="HOGENOM" id="CLU_009039_2_0_6"/>
<dbReference type="Proteomes" id="UP000002525">
    <property type="component" value="Chromosome"/>
</dbReference>
<dbReference type="GO" id="GO:0009279">
    <property type="term" value="C:cell outer membrane"/>
    <property type="evidence" value="ECO:0007669"/>
    <property type="project" value="UniProtKB-SubCell"/>
</dbReference>
<dbReference type="GO" id="GO:1990351">
    <property type="term" value="C:transporter complex"/>
    <property type="evidence" value="ECO:0007669"/>
    <property type="project" value="TreeGrafter"/>
</dbReference>
<dbReference type="GO" id="GO:0043165">
    <property type="term" value="P:Gram-negative-bacterium-type cell outer membrane assembly"/>
    <property type="evidence" value="ECO:0007669"/>
    <property type="project" value="UniProtKB-UniRule"/>
</dbReference>
<dbReference type="GO" id="GO:0015920">
    <property type="term" value="P:lipopolysaccharide transport"/>
    <property type="evidence" value="ECO:0007669"/>
    <property type="project" value="InterPro"/>
</dbReference>
<dbReference type="Gene3D" id="2.60.450.10">
    <property type="entry name" value="Lipopolysaccharide (LPS) transport protein A like domain"/>
    <property type="match status" value="1"/>
</dbReference>
<dbReference type="HAMAP" id="MF_01411">
    <property type="entry name" value="LPS_assembly_LptD"/>
    <property type="match status" value="1"/>
</dbReference>
<dbReference type="InterPro" id="IPR020889">
    <property type="entry name" value="LipoPS_assembly_LptD"/>
</dbReference>
<dbReference type="InterPro" id="IPR050218">
    <property type="entry name" value="LptD"/>
</dbReference>
<dbReference type="InterPro" id="IPR007543">
    <property type="entry name" value="LptD_C"/>
</dbReference>
<dbReference type="InterPro" id="IPR005653">
    <property type="entry name" value="OstA-like_N"/>
</dbReference>
<dbReference type="NCBIfam" id="NF002997">
    <property type="entry name" value="PRK03761.1"/>
    <property type="match status" value="1"/>
</dbReference>
<dbReference type="PANTHER" id="PTHR30189">
    <property type="entry name" value="LPS-ASSEMBLY PROTEIN"/>
    <property type="match status" value="1"/>
</dbReference>
<dbReference type="PANTHER" id="PTHR30189:SF1">
    <property type="entry name" value="LPS-ASSEMBLY PROTEIN LPTD"/>
    <property type="match status" value="1"/>
</dbReference>
<dbReference type="Pfam" id="PF04453">
    <property type="entry name" value="LptD"/>
    <property type="match status" value="1"/>
</dbReference>
<dbReference type="Pfam" id="PF03968">
    <property type="entry name" value="LptD_N"/>
    <property type="match status" value="1"/>
</dbReference>
<comment type="function">
    <text evidence="1">Together with LptE, is involved in the assembly of lipopolysaccharide (LPS) at the surface of the outer membrane.</text>
</comment>
<comment type="subunit">
    <text evidence="1">Component of the lipopolysaccharide transport and assembly complex. Interacts with LptE and LptA.</text>
</comment>
<comment type="subcellular location">
    <subcellularLocation>
        <location evidence="1">Cell outer membrane</location>
    </subcellularLocation>
</comment>
<comment type="similarity">
    <text evidence="1">Belongs to the LptD family.</text>
</comment>
<keyword id="KW-0998">Cell outer membrane</keyword>
<keyword id="KW-0472">Membrane</keyword>
<keyword id="KW-0732">Signal</keyword>
<accession>Q4QMG4</accession>
<protein>
    <recommendedName>
        <fullName evidence="1">LPS-assembly protein LptD</fullName>
    </recommendedName>
</protein>
<organism>
    <name type="scientific">Haemophilus influenzae (strain 86-028NP)</name>
    <dbReference type="NCBI Taxonomy" id="281310"/>
    <lineage>
        <taxon>Bacteria</taxon>
        <taxon>Pseudomonadati</taxon>
        <taxon>Pseudomonadota</taxon>
        <taxon>Gammaproteobacteria</taxon>
        <taxon>Pasteurellales</taxon>
        <taxon>Pasteurellaceae</taxon>
        <taxon>Haemophilus</taxon>
    </lineage>
</organism>
<proteinExistence type="inferred from homology"/>
<sequence length="782" mass="90215">MNKKHTLISLAILTALYSQQSLADLHEQCLMGVPKFSGEVVTGDVNSLPVYIEADNAEINQPNDATYQGNVDLKQGNRHLLAQSVQVKQSGNQSTPLRMAYVRNGFDYKDNQINMLGKDAEFNLDSHDGNLTNSEYEFVGRQGRGKADNITLHNNYRVMKNATFTSCLHGDNAWAVDASEIRQYVKEEYAEMWHARFKIHGVPVFYTPYLQLPIGDRRRSGLLIPSAGTSNRDGLWYAQPIYWNIAPNYDLTFTPKYMSRRGWQANGEFRYLTSIGEGKVAGEYLGKDRYSEYASDNRKRHLFYWNHNSSFLQNWRLNINYTRVSDKRYFNDFDSIYGRSTDGYANQYARIAYYQPNYNFSLSAHQFQIFDDIVNIGPYRAVPQLDFNYHKYDLANGWLNFKLHSQAVRFDNDSKLMPTAWRFHAEPSLNSLMSNKYGSLNIETKLYATRYEQKKGSGKNAEDVQKTVNRVIPQFKVDLQSVLSRDITFLKEYTQTFEPHVQYLYRPYRNQSNIGSTLNNDYLGFGYDSALVQQDYYSLFRDRRYSGLDRISSANQVTLGGTTRFYDIAGEERFNLSAGQIYYLSNSRIDENPANKTPTSSSAWALESNWKISNKWYWRGSYQFDTHTNSTSLANTSLEYNPEKNNLIQLNYRYVNQEYIDQNLGKSANAYQQDIQQVGLVVGWEIANNWAVVGRYYQDLALQKPVEQYLGVQYNSCCWAASVGVKRNVTNHQNQTRNEIVYDNSIGITLELRGLGSNDHQSGIQEMLEKGKLPYIRAFSLD</sequence>
<evidence type="ECO:0000255" key="1">
    <source>
        <dbReference type="HAMAP-Rule" id="MF_01411"/>
    </source>
</evidence>
<feature type="signal peptide" evidence="1">
    <location>
        <begin position="1"/>
        <end position="23"/>
    </location>
</feature>
<feature type="chain" id="PRO_0000281609" description="LPS-assembly protein LptD">
    <location>
        <begin position="24"/>
        <end position="782"/>
    </location>
</feature>
<name>LPTD_HAEI8</name>